<accession>Q7MGL4</accession>
<gene>
    <name evidence="1" type="primary">hemF</name>
    <name type="ordered locus">VV3216</name>
</gene>
<name>HEM6_VIBVY</name>
<sequence>MSTIDKEAVKLYLMQLQDQICQRLEQEDGKATFIEDAWHREPGDRLGGGGRTRVMRNGNVFEQGGVNFSHVQGNAMPASATAHRPELAGRRFEAMGVSLVMHPHNPYVPTSHANVRFFIAEKEGEAPIWWFGGGFDLTPFYPFEEDCQFWHNTAKEVCAPFGADVYAQHKAWCDDYFYLPHRGETRGIGGLFFDDLNQWEFDKCFDYIKAVGEGYCDAYLPIVERRKVTEYGEREREFQLYRRGRYVEFNLVYDRGTLFGLQSGGRTESILMSMPPLARWEYSYEPQADSPEASLYQHYLKPREW</sequence>
<reference key="1">
    <citation type="journal article" date="2003" name="Genome Res.">
        <title>Comparative genome analysis of Vibrio vulnificus, a marine pathogen.</title>
        <authorList>
            <person name="Chen C.-Y."/>
            <person name="Wu K.-M."/>
            <person name="Chang Y.-C."/>
            <person name="Chang C.-H."/>
            <person name="Tsai H.-C."/>
            <person name="Liao T.-L."/>
            <person name="Liu Y.-M."/>
            <person name="Chen H.-J."/>
            <person name="Shen A.B.-T."/>
            <person name="Li J.-C."/>
            <person name="Su T.-L."/>
            <person name="Shao C.-P."/>
            <person name="Lee C.-T."/>
            <person name="Hor L.-I."/>
            <person name="Tsai S.-F."/>
        </authorList>
    </citation>
    <scope>NUCLEOTIDE SEQUENCE [LARGE SCALE GENOMIC DNA]</scope>
    <source>
        <strain>YJ016</strain>
    </source>
</reference>
<proteinExistence type="inferred from homology"/>
<protein>
    <recommendedName>
        <fullName evidence="1">Oxygen-dependent coproporphyrinogen-III oxidase</fullName>
        <shortName evidence="1">CPO</shortName>
        <shortName evidence="1">Coprogen oxidase</shortName>
        <shortName evidence="1">Coproporphyrinogenase</shortName>
        <ecNumber evidence="1">1.3.3.3</ecNumber>
    </recommendedName>
</protein>
<dbReference type="EC" id="1.3.3.3" evidence="1"/>
<dbReference type="EMBL" id="BA000037">
    <property type="protein sequence ID" value="BAC95980.1"/>
    <property type="molecule type" value="Genomic_DNA"/>
</dbReference>
<dbReference type="RefSeq" id="WP_011151417.1">
    <property type="nucleotide sequence ID" value="NC_005139.1"/>
</dbReference>
<dbReference type="SMR" id="Q7MGL4"/>
<dbReference type="STRING" id="672.VV93_v1c29390"/>
<dbReference type="KEGG" id="vvy:VV3216"/>
<dbReference type="PATRIC" id="fig|196600.6.peg.3182"/>
<dbReference type="eggNOG" id="COG0408">
    <property type="taxonomic scope" value="Bacteria"/>
</dbReference>
<dbReference type="HOGENOM" id="CLU_026169_0_1_6"/>
<dbReference type="UniPathway" id="UPA00251">
    <property type="reaction ID" value="UER00322"/>
</dbReference>
<dbReference type="Proteomes" id="UP000002675">
    <property type="component" value="Chromosome I"/>
</dbReference>
<dbReference type="GO" id="GO:0005737">
    <property type="term" value="C:cytoplasm"/>
    <property type="evidence" value="ECO:0007669"/>
    <property type="project" value="UniProtKB-SubCell"/>
</dbReference>
<dbReference type="GO" id="GO:0004109">
    <property type="term" value="F:coproporphyrinogen oxidase activity"/>
    <property type="evidence" value="ECO:0007669"/>
    <property type="project" value="UniProtKB-UniRule"/>
</dbReference>
<dbReference type="GO" id="GO:0046872">
    <property type="term" value="F:metal ion binding"/>
    <property type="evidence" value="ECO:0007669"/>
    <property type="project" value="UniProtKB-KW"/>
</dbReference>
<dbReference type="GO" id="GO:0042803">
    <property type="term" value="F:protein homodimerization activity"/>
    <property type="evidence" value="ECO:0000250"/>
    <property type="project" value="UniProtKB"/>
</dbReference>
<dbReference type="GO" id="GO:0006782">
    <property type="term" value="P:protoporphyrinogen IX biosynthetic process"/>
    <property type="evidence" value="ECO:0007669"/>
    <property type="project" value="UniProtKB-UniRule"/>
</dbReference>
<dbReference type="FunFam" id="3.40.1500.10:FF:000001">
    <property type="entry name" value="Oxygen-dependent coproporphyrinogen-III oxidase"/>
    <property type="match status" value="1"/>
</dbReference>
<dbReference type="Gene3D" id="3.40.1500.10">
    <property type="entry name" value="Coproporphyrinogen III oxidase, aerobic"/>
    <property type="match status" value="1"/>
</dbReference>
<dbReference type="HAMAP" id="MF_00333">
    <property type="entry name" value="Coprogen_oxidas"/>
    <property type="match status" value="1"/>
</dbReference>
<dbReference type="InterPro" id="IPR001260">
    <property type="entry name" value="Coprogen_oxidase_aer"/>
</dbReference>
<dbReference type="InterPro" id="IPR036406">
    <property type="entry name" value="Coprogen_oxidase_aer_sf"/>
</dbReference>
<dbReference type="InterPro" id="IPR018375">
    <property type="entry name" value="Coprogen_oxidase_CS"/>
</dbReference>
<dbReference type="NCBIfam" id="NF003727">
    <property type="entry name" value="PRK05330.1"/>
    <property type="match status" value="1"/>
</dbReference>
<dbReference type="PANTHER" id="PTHR10755">
    <property type="entry name" value="COPROPORPHYRINOGEN III OXIDASE, MITOCHONDRIAL"/>
    <property type="match status" value="1"/>
</dbReference>
<dbReference type="PANTHER" id="PTHR10755:SF0">
    <property type="entry name" value="OXYGEN-DEPENDENT COPROPORPHYRINOGEN-III OXIDASE, MITOCHONDRIAL"/>
    <property type="match status" value="1"/>
</dbReference>
<dbReference type="Pfam" id="PF01218">
    <property type="entry name" value="Coprogen_oxidas"/>
    <property type="match status" value="1"/>
</dbReference>
<dbReference type="PIRSF" id="PIRSF000166">
    <property type="entry name" value="Coproporphyri_ox"/>
    <property type="match status" value="1"/>
</dbReference>
<dbReference type="PRINTS" id="PR00073">
    <property type="entry name" value="COPRGNOXDASE"/>
</dbReference>
<dbReference type="SUPFAM" id="SSF102886">
    <property type="entry name" value="Coproporphyrinogen III oxidase"/>
    <property type="match status" value="1"/>
</dbReference>
<dbReference type="PROSITE" id="PS01021">
    <property type="entry name" value="COPROGEN_OXIDASE"/>
    <property type="match status" value="1"/>
</dbReference>
<keyword id="KW-0963">Cytoplasm</keyword>
<keyword id="KW-0350">Heme biosynthesis</keyword>
<keyword id="KW-0479">Metal-binding</keyword>
<keyword id="KW-0560">Oxidoreductase</keyword>
<keyword id="KW-0627">Porphyrin biosynthesis</keyword>
<organism>
    <name type="scientific">Vibrio vulnificus (strain YJ016)</name>
    <dbReference type="NCBI Taxonomy" id="196600"/>
    <lineage>
        <taxon>Bacteria</taxon>
        <taxon>Pseudomonadati</taxon>
        <taxon>Pseudomonadota</taxon>
        <taxon>Gammaproteobacteria</taxon>
        <taxon>Vibrionales</taxon>
        <taxon>Vibrionaceae</taxon>
        <taxon>Vibrio</taxon>
    </lineage>
</organism>
<evidence type="ECO:0000255" key="1">
    <source>
        <dbReference type="HAMAP-Rule" id="MF_00333"/>
    </source>
</evidence>
<comment type="function">
    <text evidence="1">Involved in the heme biosynthesis. Catalyzes the aerobic oxidative decarboxylation of propionate groups of rings A and B of coproporphyrinogen-III to yield the vinyl groups in protoporphyrinogen-IX.</text>
</comment>
<comment type="catalytic activity">
    <reaction evidence="1">
        <text>coproporphyrinogen III + O2 + 2 H(+) = protoporphyrinogen IX + 2 CO2 + 2 H2O</text>
        <dbReference type="Rhea" id="RHEA:18257"/>
        <dbReference type="ChEBI" id="CHEBI:15377"/>
        <dbReference type="ChEBI" id="CHEBI:15378"/>
        <dbReference type="ChEBI" id="CHEBI:15379"/>
        <dbReference type="ChEBI" id="CHEBI:16526"/>
        <dbReference type="ChEBI" id="CHEBI:57307"/>
        <dbReference type="ChEBI" id="CHEBI:57309"/>
        <dbReference type="EC" id="1.3.3.3"/>
    </reaction>
</comment>
<comment type="cofactor">
    <cofactor evidence="1">
        <name>a divalent metal cation</name>
        <dbReference type="ChEBI" id="CHEBI:60240"/>
    </cofactor>
</comment>
<comment type="pathway">
    <text evidence="1">Porphyrin-containing compound metabolism; protoporphyrin-IX biosynthesis; protoporphyrinogen-IX from coproporphyrinogen-III (O2 route): step 1/1.</text>
</comment>
<comment type="subunit">
    <text evidence="1">Homodimer.</text>
</comment>
<comment type="subcellular location">
    <subcellularLocation>
        <location evidence="1">Cytoplasm</location>
    </subcellularLocation>
</comment>
<comment type="similarity">
    <text evidence="1">Belongs to the aerobic coproporphyrinogen-III oxidase family.</text>
</comment>
<feature type="chain" id="PRO_0000109929" description="Oxygen-dependent coproporphyrinogen-III oxidase">
    <location>
        <begin position="1"/>
        <end position="305"/>
    </location>
</feature>
<feature type="region of interest" description="Important for dimerization" evidence="1">
    <location>
        <begin position="246"/>
        <end position="281"/>
    </location>
</feature>
<feature type="active site" description="Proton donor" evidence="1">
    <location>
        <position position="112"/>
    </location>
</feature>
<feature type="binding site" evidence="1">
    <location>
        <position position="98"/>
    </location>
    <ligand>
        <name>substrate</name>
    </ligand>
</feature>
<feature type="binding site" evidence="1">
    <location>
        <position position="102"/>
    </location>
    <ligand>
        <name>a divalent metal cation</name>
        <dbReference type="ChEBI" id="CHEBI:60240"/>
    </ligand>
</feature>
<feature type="binding site" evidence="1">
    <location>
        <position position="112"/>
    </location>
    <ligand>
        <name>a divalent metal cation</name>
        <dbReference type="ChEBI" id="CHEBI:60240"/>
    </ligand>
</feature>
<feature type="binding site" evidence="1">
    <location>
        <begin position="114"/>
        <end position="116"/>
    </location>
    <ligand>
        <name>substrate</name>
    </ligand>
</feature>
<feature type="binding site" evidence="1">
    <location>
        <position position="151"/>
    </location>
    <ligand>
        <name>a divalent metal cation</name>
        <dbReference type="ChEBI" id="CHEBI:60240"/>
    </ligand>
</feature>
<feature type="binding site" evidence="1">
    <location>
        <position position="181"/>
    </location>
    <ligand>
        <name>a divalent metal cation</name>
        <dbReference type="ChEBI" id="CHEBI:60240"/>
    </ligand>
</feature>
<feature type="binding site" evidence="1">
    <location>
        <begin position="264"/>
        <end position="266"/>
    </location>
    <ligand>
        <name>substrate</name>
    </ligand>
</feature>
<feature type="site" description="Important for dimerization" evidence="1">
    <location>
        <position position="181"/>
    </location>
</feature>